<evidence type="ECO:0000250" key="1"/>
<evidence type="ECO:0000305" key="2"/>
<accession>O48928</accession>
<dbReference type="EC" id="1.14.-.-"/>
<dbReference type="EMBL" id="AF022464">
    <property type="protein sequence ID" value="AAB94593.1"/>
    <property type="molecule type" value="mRNA"/>
</dbReference>
<dbReference type="PIR" id="T05948">
    <property type="entry name" value="T05948"/>
</dbReference>
<dbReference type="SMR" id="O48928"/>
<dbReference type="FunCoup" id="O48928">
    <property type="interactions" value="228"/>
</dbReference>
<dbReference type="STRING" id="3847.O48928"/>
<dbReference type="PaxDb" id="3847-GLYMA20G32930.1"/>
<dbReference type="eggNOG" id="KOG0156">
    <property type="taxonomic scope" value="Eukaryota"/>
</dbReference>
<dbReference type="InParanoid" id="O48928"/>
<dbReference type="Proteomes" id="UP000008827">
    <property type="component" value="Unplaced"/>
</dbReference>
<dbReference type="GO" id="GO:0016020">
    <property type="term" value="C:membrane"/>
    <property type="evidence" value="ECO:0000318"/>
    <property type="project" value="GO_Central"/>
</dbReference>
<dbReference type="GO" id="GO:0020037">
    <property type="term" value="F:heme binding"/>
    <property type="evidence" value="ECO:0007669"/>
    <property type="project" value="InterPro"/>
</dbReference>
<dbReference type="GO" id="GO:0005506">
    <property type="term" value="F:iron ion binding"/>
    <property type="evidence" value="ECO:0007669"/>
    <property type="project" value="InterPro"/>
</dbReference>
<dbReference type="GO" id="GO:0016709">
    <property type="term" value="F:oxidoreductase activity, acting on paired donors, with incorporation or reduction of molecular oxygen, NAD(P)H as one donor, and incorporation of one atom of oxygen"/>
    <property type="evidence" value="ECO:0000318"/>
    <property type="project" value="GO_Central"/>
</dbReference>
<dbReference type="CDD" id="cd11075">
    <property type="entry name" value="CYP77_89"/>
    <property type="match status" value="1"/>
</dbReference>
<dbReference type="FunFam" id="1.10.630.10:FF:000012">
    <property type="entry name" value="Cytochrome P450 family protein"/>
    <property type="match status" value="1"/>
</dbReference>
<dbReference type="Gene3D" id="1.10.630.10">
    <property type="entry name" value="Cytochrome P450"/>
    <property type="match status" value="1"/>
</dbReference>
<dbReference type="InterPro" id="IPR001128">
    <property type="entry name" value="Cyt_P450"/>
</dbReference>
<dbReference type="InterPro" id="IPR017972">
    <property type="entry name" value="Cyt_P450_CS"/>
</dbReference>
<dbReference type="InterPro" id="IPR002401">
    <property type="entry name" value="Cyt_P450_E_grp-I"/>
</dbReference>
<dbReference type="InterPro" id="IPR036396">
    <property type="entry name" value="Cyt_P450_sf"/>
</dbReference>
<dbReference type="PANTHER" id="PTHR47944:SF19">
    <property type="entry name" value="CYTOCHROME P450 77A4"/>
    <property type="match status" value="1"/>
</dbReference>
<dbReference type="PANTHER" id="PTHR47944">
    <property type="entry name" value="CYTOCHROME P450 98A9"/>
    <property type="match status" value="1"/>
</dbReference>
<dbReference type="Pfam" id="PF00067">
    <property type="entry name" value="p450"/>
    <property type="match status" value="1"/>
</dbReference>
<dbReference type="PRINTS" id="PR00463">
    <property type="entry name" value="EP450I"/>
</dbReference>
<dbReference type="PRINTS" id="PR00385">
    <property type="entry name" value="P450"/>
</dbReference>
<dbReference type="SUPFAM" id="SSF48264">
    <property type="entry name" value="Cytochrome P450"/>
    <property type="match status" value="1"/>
</dbReference>
<dbReference type="PROSITE" id="PS00086">
    <property type="entry name" value="CYTOCHROME_P450"/>
    <property type="match status" value="1"/>
</dbReference>
<name>C77A3_SOYBN</name>
<organism>
    <name type="scientific">Glycine max</name>
    <name type="common">Soybean</name>
    <name type="synonym">Glycine hispida</name>
    <dbReference type="NCBI Taxonomy" id="3847"/>
    <lineage>
        <taxon>Eukaryota</taxon>
        <taxon>Viridiplantae</taxon>
        <taxon>Streptophyta</taxon>
        <taxon>Embryophyta</taxon>
        <taxon>Tracheophyta</taxon>
        <taxon>Spermatophyta</taxon>
        <taxon>Magnoliopsida</taxon>
        <taxon>eudicotyledons</taxon>
        <taxon>Gunneridae</taxon>
        <taxon>Pentapetalae</taxon>
        <taxon>rosids</taxon>
        <taxon>fabids</taxon>
        <taxon>Fabales</taxon>
        <taxon>Fabaceae</taxon>
        <taxon>Papilionoideae</taxon>
        <taxon>50 kb inversion clade</taxon>
        <taxon>NPAAA clade</taxon>
        <taxon>indigoferoid/millettioid clade</taxon>
        <taxon>Phaseoleae</taxon>
        <taxon>Glycine</taxon>
        <taxon>Glycine subgen. Soja</taxon>
    </lineage>
</organism>
<protein>
    <recommendedName>
        <fullName>Cytochrome P450 77A3</fullName>
        <ecNumber>1.14.-.-</ecNumber>
    </recommendedName>
</protein>
<gene>
    <name type="primary">CYP77A3</name>
</gene>
<feature type="chain" id="PRO_0000052147" description="Cytochrome P450 77A3">
    <location>
        <begin position="1"/>
        <end position="513"/>
    </location>
</feature>
<feature type="binding site" description="axial binding residue" evidence="1">
    <location>
        <position position="451"/>
    </location>
    <ligand>
        <name>heme</name>
        <dbReference type="ChEBI" id="CHEBI:30413"/>
    </ligand>
    <ligandPart>
        <name>Fe</name>
        <dbReference type="ChEBI" id="CHEBI:18248"/>
    </ligandPart>
</feature>
<comment type="cofactor">
    <cofactor evidence="1">
        <name>heme</name>
        <dbReference type="ChEBI" id="CHEBI:30413"/>
    </cofactor>
</comment>
<comment type="similarity">
    <text evidence="2">Belongs to the cytochrome P450 family.</text>
</comment>
<reference key="1">
    <citation type="submission" date="1997-09" db="EMBL/GenBank/DDBJ databases">
        <authorList>
            <person name="Siminszky B."/>
            <person name="Dewey R.E."/>
            <person name="Corbin F.T."/>
        </authorList>
    </citation>
    <scope>NUCLEOTIDE SEQUENCE [MRNA]</scope>
</reference>
<sequence>MATLSSYDHFIFTALAFFISGLIFFLKQKSKSKKFNLPPGPPGWPIVGNLFQVARSGKPFFEYVNDVRLKYGSIFTLKMGTRTMIILTDAKLVHEAMIQKGATYATRPPENPTRTIFSENKFTVNAATYGPVWKSLRRNMVQNMLSSTRLKEFRSVRDNAMDKLINRLKDEAEKNNGVVWVLKDARFAVFCILVAMCFGLEMDEETVERIDQVMKSVLITLDPRIDDYLPILSPFFSKQRKKALEVRREQVEFLVPIIEQRRRAIQNPGSDHTATTFSYLDTLFDLKVEGKKSAPSDAELVSLCSEFLNGGTDTTATAVEWGIAQLIANPNVQTKLYEEIKRTVGEKKVDEKDVEKMPYLHAVVKELLRKHPPTHFVLTHAVTEPTTLGGYDIPIDANVEVYTPAIAEDPKNWLNPEKFDPERFISGGEEADITGVTGVKMMPFGVGRRICPGLAMATVHIHLMMARMVQEFEWGAYPPEKKMDFTGKWEFTVVMKESLRATIKPRGGEKVKL</sequence>
<proteinExistence type="evidence at transcript level"/>
<keyword id="KW-0349">Heme</keyword>
<keyword id="KW-0408">Iron</keyword>
<keyword id="KW-0479">Metal-binding</keyword>
<keyword id="KW-0503">Monooxygenase</keyword>
<keyword id="KW-0560">Oxidoreductase</keyword>
<keyword id="KW-1185">Reference proteome</keyword>